<organism>
    <name type="scientific">Methanobrevibacter smithii</name>
    <dbReference type="NCBI Taxonomy" id="2173"/>
    <lineage>
        <taxon>Archaea</taxon>
        <taxon>Methanobacteriati</taxon>
        <taxon>Methanobacteriota</taxon>
        <taxon>Methanomada group</taxon>
        <taxon>Methanobacteria</taxon>
        <taxon>Methanobacteriales</taxon>
        <taxon>Methanobacteriaceae</taxon>
        <taxon>Methanobrevibacter</taxon>
    </lineage>
</organism>
<keyword id="KW-0814">Transposable element</keyword>
<dbReference type="EMBL" id="X02587">
    <property type="protein sequence ID" value="CAA26424.1"/>
    <property type="molecule type" value="Genomic_DNA"/>
</dbReference>
<dbReference type="PIR" id="S28653">
    <property type="entry name" value="S28653"/>
</dbReference>
<dbReference type="RefSeq" id="WP_011953615.1">
    <property type="nucleotide sequence ID" value="NZ_JBGOSM010000060.1"/>
</dbReference>
<dbReference type="GeneID" id="78818237"/>
<dbReference type="OMA" id="CAIDEMD"/>
<proteinExistence type="predicted"/>
<accession>P22344</accession>
<sequence>MTKQNKSALNSNIDFIQLKLYDFFDEKIDQEKIISKRLNKTPNFENTNHKLFLDENNTFKYDNPICPVCGSHKIIKKGTIKKNKQNTNGKTTEFKEQQYQCKKCGKKFGIYNNPLIGENKQFLQEIMDKIPGIMKIGYQSLRKISKYFEIFLGIRISHQTIKNWSDKNHEESISNEKFEYSGYYLYDEQFLRLNGTRHYRLTLFDAILNIPVTERIVRRRIPKNTKKFILESTENKPFICLTTDLFPMYRNVADEIEVKHQLCIFHLFQTINHKLKVYCRRNKINGKQRDHIYENAQELKNCFRQNSKKEAIEQFKQYLQKYTAIPVVLKDFIRKHIINHFHRYVEYLDDENIEKTSNKVENYYRQTNPEKIKKIYKTKNGILTFLDYQMQNWTEKHIKIK</sequence>
<name>YI48_METSM</name>
<feature type="chain" id="PRO_0000075518" description="Insertion element ISM1 uncharacterized 48.3 kDa protein">
    <location>
        <begin position="1"/>
        <end position="401"/>
    </location>
</feature>
<reference key="1">
    <citation type="journal article" date="1985" name="Mol. Gen. Genet.">
        <title>Structure of genes and an insertion element in the methane producing archaebacterium Methanobrevibacter smithii.</title>
        <authorList>
            <person name="Hamilton P.T."/>
            <person name="Reeve J.N."/>
        </authorList>
    </citation>
    <scope>NUCLEOTIDE SEQUENCE [GENOMIC DNA]</scope>
</reference>
<comment type="function">
    <text>This polypeptide is involved in transposition, and should therefore bind to nucleic acids.</text>
</comment>
<comment type="miscellaneous">
    <text>The ORFIS open reading frame represents 87% of the sequence of ISM1, a mobile insertion element.</text>
</comment>
<protein>
    <recommendedName>
        <fullName>Insertion element ISM1 uncharacterized 48.3 kDa protein</fullName>
    </recommendedName>
    <alternativeName>
        <fullName>ORFIS</fullName>
    </alternativeName>
</protein>